<gene>
    <name evidence="1" type="primary">dapB</name>
    <name type="ordered locus">Meso_3592</name>
</gene>
<name>DAPB_CHESB</name>
<organism>
    <name type="scientific">Chelativorans sp. (strain BNC1)</name>
    <dbReference type="NCBI Taxonomy" id="266779"/>
    <lineage>
        <taxon>Bacteria</taxon>
        <taxon>Pseudomonadati</taxon>
        <taxon>Pseudomonadota</taxon>
        <taxon>Alphaproteobacteria</taxon>
        <taxon>Hyphomicrobiales</taxon>
        <taxon>Phyllobacteriaceae</taxon>
        <taxon>Chelativorans</taxon>
    </lineage>
</organism>
<comment type="function">
    <text evidence="1">Catalyzes the conversion of 4-hydroxy-tetrahydrodipicolinate (HTPA) to tetrahydrodipicolinate.</text>
</comment>
<comment type="catalytic activity">
    <reaction evidence="1">
        <text>(S)-2,3,4,5-tetrahydrodipicolinate + NAD(+) + H2O = (2S,4S)-4-hydroxy-2,3,4,5-tetrahydrodipicolinate + NADH + H(+)</text>
        <dbReference type="Rhea" id="RHEA:35323"/>
        <dbReference type="ChEBI" id="CHEBI:15377"/>
        <dbReference type="ChEBI" id="CHEBI:15378"/>
        <dbReference type="ChEBI" id="CHEBI:16845"/>
        <dbReference type="ChEBI" id="CHEBI:57540"/>
        <dbReference type="ChEBI" id="CHEBI:57945"/>
        <dbReference type="ChEBI" id="CHEBI:67139"/>
        <dbReference type="EC" id="1.17.1.8"/>
    </reaction>
</comment>
<comment type="catalytic activity">
    <reaction evidence="1">
        <text>(S)-2,3,4,5-tetrahydrodipicolinate + NADP(+) + H2O = (2S,4S)-4-hydroxy-2,3,4,5-tetrahydrodipicolinate + NADPH + H(+)</text>
        <dbReference type="Rhea" id="RHEA:35331"/>
        <dbReference type="ChEBI" id="CHEBI:15377"/>
        <dbReference type="ChEBI" id="CHEBI:15378"/>
        <dbReference type="ChEBI" id="CHEBI:16845"/>
        <dbReference type="ChEBI" id="CHEBI:57783"/>
        <dbReference type="ChEBI" id="CHEBI:58349"/>
        <dbReference type="ChEBI" id="CHEBI:67139"/>
        <dbReference type="EC" id="1.17.1.8"/>
    </reaction>
</comment>
<comment type="pathway">
    <text evidence="1">Amino-acid biosynthesis; L-lysine biosynthesis via DAP pathway; (S)-tetrahydrodipicolinate from L-aspartate: step 4/4.</text>
</comment>
<comment type="subcellular location">
    <subcellularLocation>
        <location evidence="1">Cytoplasm</location>
    </subcellularLocation>
</comment>
<comment type="similarity">
    <text evidence="1">Belongs to the DapB family.</text>
</comment>
<comment type="caution">
    <text evidence="2">Was originally thought to be a dihydrodipicolinate reductase (DHDPR), catalyzing the conversion of dihydrodipicolinate to tetrahydrodipicolinate. However, it was shown in E.coli that the substrate of the enzymatic reaction is not dihydrodipicolinate (DHDP) but in fact (2S,4S)-4-hydroxy-2,3,4,5-tetrahydrodipicolinic acid (HTPA), the product released by the DapA-catalyzed reaction.</text>
</comment>
<protein>
    <recommendedName>
        <fullName evidence="1">4-hydroxy-tetrahydrodipicolinate reductase</fullName>
        <shortName evidence="1">HTPA reductase</shortName>
        <ecNumber evidence="1">1.17.1.8</ecNumber>
    </recommendedName>
</protein>
<evidence type="ECO:0000255" key="1">
    <source>
        <dbReference type="HAMAP-Rule" id="MF_00102"/>
    </source>
</evidence>
<evidence type="ECO:0000305" key="2"/>
<accession>Q11CB4</accession>
<dbReference type="EC" id="1.17.1.8" evidence="1"/>
<dbReference type="EMBL" id="CP000390">
    <property type="protein sequence ID" value="ABG64961.1"/>
    <property type="molecule type" value="Genomic_DNA"/>
</dbReference>
<dbReference type="SMR" id="Q11CB4"/>
<dbReference type="STRING" id="266779.Meso_3592"/>
<dbReference type="KEGG" id="mes:Meso_3592"/>
<dbReference type="eggNOG" id="COG0289">
    <property type="taxonomic scope" value="Bacteria"/>
</dbReference>
<dbReference type="HOGENOM" id="CLU_047479_2_1_5"/>
<dbReference type="OrthoDB" id="9790352at2"/>
<dbReference type="UniPathway" id="UPA00034">
    <property type="reaction ID" value="UER00018"/>
</dbReference>
<dbReference type="GO" id="GO:0005829">
    <property type="term" value="C:cytosol"/>
    <property type="evidence" value="ECO:0007669"/>
    <property type="project" value="TreeGrafter"/>
</dbReference>
<dbReference type="GO" id="GO:0008839">
    <property type="term" value="F:4-hydroxy-tetrahydrodipicolinate reductase"/>
    <property type="evidence" value="ECO:0007669"/>
    <property type="project" value="UniProtKB-EC"/>
</dbReference>
<dbReference type="GO" id="GO:0051287">
    <property type="term" value="F:NAD binding"/>
    <property type="evidence" value="ECO:0007669"/>
    <property type="project" value="UniProtKB-UniRule"/>
</dbReference>
<dbReference type="GO" id="GO:0050661">
    <property type="term" value="F:NADP binding"/>
    <property type="evidence" value="ECO:0007669"/>
    <property type="project" value="UniProtKB-UniRule"/>
</dbReference>
<dbReference type="GO" id="GO:0016726">
    <property type="term" value="F:oxidoreductase activity, acting on CH or CH2 groups, NAD or NADP as acceptor"/>
    <property type="evidence" value="ECO:0007669"/>
    <property type="project" value="UniProtKB-UniRule"/>
</dbReference>
<dbReference type="GO" id="GO:0019877">
    <property type="term" value="P:diaminopimelate biosynthetic process"/>
    <property type="evidence" value="ECO:0007669"/>
    <property type="project" value="UniProtKB-UniRule"/>
</dbReference>
<dbReference type="GO" id="GO:0009089">
    <property type="term" value="P:lysine biosynthetic process via diaminopimelate"/>
    <property type="evidence" value="ECO:0007669"/>
    <property type="project" value="UniProtKB-UniRule"/>
</dbReference>
<dbReference type="CDD" id="cd02274">
    <property type="entry name" value="DHDPR_N"/>
    <property type="match status" value="1"/>
</dbReference>
<dbReference type="FunFam" id="3.30.360.10:FF:000004">
    <property type="entry name" value="4-hydroxy-tetrahydrodipicolinate reductase"/>
    <property type="match status" value="1"/>
</dbReference>
<dbReference type="Gene3D" id="3.30.360.10">
    <property type="entry name" value="Dihydrodipicolinate Reductase, domain 2"/>
    <property type="match status" value="1"/>
</dbReference>
<dbReference type="Gene3D" id="3.40.50.720">
    <property type="entry name" value="NAD(P)-binding Rossmann-like Domain"/>
    <property type="match status" value="1"/>
</dbReference>
<dbReference type="HAMAP" id="MF_00102">
    <property type="entry name" value="DapB"/>
    <property type="match status" value="1"/>
</dbReference>
<dbReference type="InterPro" id="IPR022663">
    <property type="entry name" value="DapB_C"/>
</dbReference>
<dbReference type="InterPro" id="IPR000846">
    <property type="entry name" value="DapB_N"/>
</dbReference>
<dbReference type="InterPro" id="IPR022664">
    <property type="entry name" value="DapB_N_CS"/>
</dbReference>
<dbReference type="InterPro" id="IPR023940">
    <property type="entry name" value="DHDPR_bac"/>
</dbReference>
<dbReference type="InterPro" id="IPR036291">
    <property type="entry name" value="NAD(P)-bd_dom_sf"/>
</dbReference>
<dbReference type="NCBIfam" id="TIGR00036">
    <property type="entry name" value="dapB"/>
    <property type="match status" value="1"/>
</dbReference>
<dbReference type="PANTHER" id="PTHR20836:SF0">
    <property type="entry name" value="4-HYDROXY-TETRAHYDRODIPICOLINATE REDUCTASE 1, CHLOROPLASTIC-RELATED"/>
    <property type="match status" value="1"/>
</dbReference>
<dbReference type="PANTHER" id="PTHR20836">
    <property type="entry name" value="DIHYDRODIPICOLINATE REDUCTASE"/>
    <property type="match status" value="1"/>
</dbReference>
<dbReference type="Pfam" id="PF05173">
    <property type="entry name" value="DapB_C"/>
    <property type="match status" value="1"/>
</dbReference>
<dbReference type="Pfam" id="PF01113">
    <property type="entry name" value="DapB_N"/>
    <property type="match status" value="1"/>
</dbReference>
<dbReference type="PIRSF" id="PIRSF000161">
    <property type="entry name" value="DHPR"/>
    <property type="match status" value="1"/>
</dbReference>
<dbReference type="SUPFAM" id="SSF55347">
    <property type="entry name" value="Glyceraldehyde-3-phosphate dehydrogenase-like, C-terminal domain"/>
    <property type="match status" value="1"/>
</dbReference>
<dbReference type="SUPFAM" id="SSF51735">
    <property type="entry name" value="NAD(P)-binding Rossmann-fold domains"/>
    <property type="match status" value="1"/>
</dbReference>
<dbReference type="PROSITE" id="PS01298">
    <property type="entry name" value="DAPB"/>
    <property type="match status" value="1"/>
</dbReference>
<feature type="chain" id="PRO_1000093979" description="4-hydroxy-tetrahydrodipicolinate reductase">
    <location>
        <begin position="1"/>
        <end position="277"/>
    </location>
</feature>
<feature type="active site" description="Proton donor/acceptor" evidence="1">
    <location>
        <position position="158"/>
    </location>
</feature>
<feature type="active site" description="Proton donor" evidence="1">
    <location>
        <position position="162"/>
    </location>
</feature>
<feature type="binding site" evidence="1">
    <location>
        <begin position="10"/>
        <end position="15"/>
    </location>
    <ligand>
        <name>NAD(+)</name>
        <dbReference type="ChEBI" id="CHEBI:57540"/>
    </ligand>
</feature>
<feature type="binding site" evidence="1">
    <location>
        <position position="36"/>
    </location>
    <ligand>
        <name>NAD(+)</name>
        <dbReference type="ChEBI" id="CHEBI:57540"/>
    </ligand>
</feature>
<feature type="binding site" evidence="1">
    <location>
        <position position="37"/>
    </location>
    <ligand>
        <name>NADP(+)</name>
        <dbReference type="ChEBI" id="CHEBI:58349"/>
    </ligand>
</feature>
<feature type="binding site" evidence="1">
    <location>
        <begin position="100"/>
        <end position="102"/>
    </location>
    <ligand>
        <name>NAD(+)</name>
        <dbReference type="ChEBI" id="CHEBI:57540"/>
    </ligand>
</feature>
<feature type="binding site" evidence="1">
    <location>
        <begin position="124"/>
        <end position="127"/>
    </location>
    <ligand>
        <name>NAD(+)</name>
        <dbReference type="ChEBI" id="CHEBI:57540"/>
    </ligand>
</feature>
<feature type="binding site" evidence="1">
    <location>
        <position position="159"/>
    </location>
    <ligand>
        <name>(S)-2,3,4,5-tetrahydrodipicolinate</name>
        <dbReference type="ChEBI" id="CHEBI:16845"/>
    </ligand>
</feature>
<feature type="binding site" evidence="1">
    <location>
        <begin position="168"/>
        <end position="169"/>
    </location>
    <ligand>
        <name>(S)-2,3,4,5-tetrahydrodipicolinate</name>
        <dbReference type="ChEBI" id="CHEBI:16845"/>
    </ligand>
</feature>
<proteinExistence type="inferred from homology"/>
<reference key="1">
    <citation type="submission" date="2006-06" db="EMBL/GenBank/DDBJ databases">
        <title>Complete sequence of chromosome of Mesorhizobium sp. BNC1.</title>
        <authorList>
            <consortium name="US DOE Joint Genome Institute"/>
            <person name="Copeland A."/>
            <person name="Lucas S."/>
            <person name="Lapidus A."/>
            <person name="Barry K."/>
            <person name="Detter J.C."/>
            <person name="Glavina del Rio T."/>
            <person name="Hammon N."/>
            <person name="Israni S."/>
            <person name="Dalin E."/>
            <person name="Tice H."/>
            <person name="Pitluck S."/>
            <person name="Chertkov O."/>
            <person name="Brettin T."/>
            <person name="Bruce D."/>
            <person name="Han C."/>
            <person name="Tapia R."/>
            <person name="Gilna P."/>
            <person name="Schmutz J."/>
            <person name="Larimer F."/>
            <person name="Land M."/>
            <person name="Hauser L."/>
            <person name="Kyrpides N."/>
            <person name="Mikhailova N."/>
            <person name="Richardson P."/>
        </authorList>
    </citation>
    <scope>NUCLEOTIDE SEQUENCE [LARGE SCALE GENOMIC DNA]</scope>
    <source>
        <strain>BNC1</strain>
    </source>
</reference>
<sequence>MNDMGLVIVGAGGRMGQTLIRTVHAMEGVRVVGAIERSGSPHLGRDAGELAGIGIINVEICDEPLSVFAKADGVLDFTTPKATVEFAGYAAQARIVHVIGTTGLSGEDEAAIAAAARHATIVKSGNMSLGVNLLSVLVKQAARALDAADFDIEILEMHHRHKVDAPSGTALLLGEAAAEGRAIELADKSVRVRDGHTGPREAGTIGFATLRGGSVVGEHSVILAGIGERIVLSHLAEDRTIFARGAVKAALWARGRKPGLHSMLDVLGFTENSDQAR</sequence>
<keyword id="KW-0028">Amino-acid biosynthesis</keyword>
<keyword id="KW-0963">Cytoplasm</keyword>
<keyword id="KW-0220">Diaminopimelate biosynthesis</keyword>
<keyword id="KW-0457">Lysine biosynthesis</keyword>
<keyword id="KW-0520">NAD</keyword>
<keyword id="KW-0521">NADP</keyword>
<keyword id="KW-0560">Oxidoreductase</keyword>